<sequence length="871" mass="100457">MLFFDKNKRILKRYSKIVEKINQLDQSMRKKSNEEIVSLSSELKERVNSLEDADRNLVEAFALVREAARRTLGMRPFDVQVMGGIALHEGKVAEMKTGEGKTLAATMPVYLNALIGKGVHVVTVNDYLARRDALWMGPVYLLLGLRVGVINSLGKSYEVVWKDPSLVEKAIKENWSVWPQEFDGEILKEEQMNKEALNAFQVELKEISRKEAYMCDVTYGTNNEFGFDYLRDNLVLDYNDKVQRGHFYAIVDEADSVLIDEARTPLIISGPSKESPSTYRRFAQIAKKFVKDKDFTIDEKARTVILTEEGVAKAEKIIGVDNLYEPGNVSLLYHLINALKALHLFKKDVDYVVMNGEVIIVDEFTGRLLPGRRYSGGLHQAIEAKEGVPIKEESITYATITFQNYFRMYEKLAGMTGTAKTEENEFVQVYGMEVVVIPTHRPMIRKDHDDLVFRTQKEKYEKIVEEIEKRYKKGQPVLVGTTSIEKSELLSSMLKKKGIPHQVLNAKHHEKEAEIVAKAGQKGMVTIATNMAGRGTDIKLGPGVAELGGLCVIGTERHESRRIDNQLRGRAGRQGDPGESIFFLSLEDDLLRIFGGEQIGKVMKILKIEEGQPIQHPMLSKLIENIQKKVEGINFSIRKSLMEMDEVLDKQRSTIYSLRDQILLEKDYDEYLKQIFEDVIGTRVEEFCSGKNWDLEGLKNSLSFLPRDLFEFDGRRFESSEELYEYLFNRMWEEYQKKRQEIGEEYSKVIRFLMLRIIDEHWRRYLEEVEHVREAVQLRAYGQKDPIVEFKKETYLMFDEMMRRINDTIANYVLRVVKVTEKDEKEAKEELGKIRLVHEEFNLVNRAMRRAMEKGKKKGGSHGLGKIRVKR</sequence>
<protein>
    <recommendedName>
        <fullName evidence="1">Protein translocase subunit SecA</fullName>
        <ecNumber evidence="1">7.4.2.8</ecNumber>
    </recommendedName>
</protein>
<organism>
    <name type="scientific">Thermotoga neapolitana (strain ATCC 49049 / DSM 4359 / NBRC 107923 / NS-E)</name>
    <dbReference type="NCBI Taxonomy" id="309803"/>
    <lineage>
        <taxon>Bacteria</taxon>
        <taxon>Thermotogati</taxon>
        <taxon>Thermotogota</taxon>
        <taxon>Thermotogae</taxon>
        <taxon>Thermotogales</taxon>
        <taxon>Thermotogaceae</taxon>
        <taxon>Thermotoga</taxon>
    </lineage>
</organism>
<dbReference type="EC" id="7.4.2.8" evidence="1"/>
<dbReference type="EMBL" id="CP000916">
    <property type="protein sequence ID" value="ACM23337.1"/>
    <property type="molecule type" value="Genomic_DNA"/>
</dbReference>
<dbReference type="RefSeq" id="WP_015919652.1">
    <property type="nucleotide sequence ID" value="NC_011978.1"/>
</dbReference>
<dbReference type="SMR" id="B9K8Q4"/>
<dbReference type="STRING" id="309803.CTN_1161"/>
<dbReference type="KEGG" id="tna:CTN_1161"/>
<dbReference type="eggNOG" id="COG0653">
    <property type="taxonomic scope" value="Bacteria"/>
</dbReference>
<dbReference type="HOGENOM" id="CLU_005314_3_0_0"/>
<dbReference type="Proteomes" id="UP000000445">
    <property type="component" value="Chromosome"/>
</dbReference>
<dbReference type="GO" id="GO:0031522">
    <property type="term" value="C:cell envelope Sec protein transport complex"/>
    <property type="evidence" value="ECO:0007669"/>
    <property type="project" value="TreeGrafter"/>
</dbReference>
<dbReference type="GO" id="GO:0005829">
    <property type="term" value="C:cytosol"/>
    <property type="evidence" value="ECO:0007669"/>
    <property type="project" value="TreeGrafter"/>
</dbReference>
<dbReference type="GO" id="GO:0005886">
    <property type="term" value="C:plasma membrane"/>
    <property type="evidence" value="ECO:0007669"/>
    <property type="project" value="UniProtKB-SubCell"/>
</dbReference>
<dbReference type="GO" id="GO:0005524">
    <property type="term" value="F:ATP binding"/>
    <property type="evidence" value="ECO:0007669"/>
    <property type="project" value="UniProtKB-UniRule"/>
</dbReference>
<dbReference type="GO" id="GO:0008564">
    <property type="term" value="F:protein-exporting ATPase activity"/>
    <property type="evidence" value="ECO:0007669"/>
    <property type="project" value="UniProtKB-EC"/>
</dbReference>
<dbReference type="GO" id="GO:0065002">
    <property type="term" value="P:intracellular protein transmembrane transport"/>
    <property type="evidence" value="ECO:0007669"/>
    <property type="project" value="UniProtKB-UniRule"/>
</dbReference>
<dbReference type="GO" id="GO:0017038">
    <property type="term" value="P:protein import"/>
    <property type="evidence" value="ECO:0007669"/>
    <property type="project" value="InterPro"/>
</dbReference>
<dbReference type="GO" id="GO:0006605">
    <property type="term" value="P:protein targeting"/>
    <property type="evidence" value="ECO:0007669"/>
    <property type="project" value="UniProtKB-UniRule"/>
</dbReference>
<dbReference type="GO" id="GO:0043952">
    <property type="term" value="P:protein transport by the Sec complex"/>
    <property type="evidence" value="ECO:0007669"/>
    <property type="project" value="TreeGrafter"/>
</dbReference>
<dbReference type="CDD" id="cd17928">
    <property type="entry name" value="DEXDc_SecA"/>
    <property type="match status" value="1"/>
</dbReference>
<dbReference type="CDD" id="cd18803">
    <property type="entry name" value="SF2_C_secA"/>
    <property type="match status" value="1"/>
</dbReference>
<dbReference type="FunFam" id="3.40.50.300:FF:000694">
    <property type="entry name" value="Preprotein translocase subunit SecA"/>
    <property type="match status" value="1"/>
</dbReference>
<dbReference type="Gene3D" id="1.10.3060.10">
    <property type="entry name" value="Helical scaffold and wing domains of SecA"/>
    <property type="match status" value="1"/>
</dbReference>
<dbReference type="Gene3D" id="3.40.50.300">
    <property type="entry name" value="P-loop containing nucleotide triphosphate hydrolases"/>
    <property type="match status" value="3"/>
</dbReference>
<dbReference type="HAMAP" id="MF_01382">
    <property type="entry name" value="SecA"/>
    <property type="match status" value="1"/>
</dbReference>
<dbReference type="InterPro" id="IPR014001">
    <property type="entry name" value="Helicase_ATP-bd"/>
</dbReference>
<dbReference type="InterPro" id="IPR001650">
    <property type="entry name" value="Helicase_C-like"/>
</dbReference>
<dbReference type="InterPro" id="IPR027417">
    <property type="entry name" value="P-loop_NTPase"/>
</dbReference>
<dbReference type="InterPro" id="IPR000185">
    <property type="entry name" value="SecA"/>
</dbReference>
<dbReference type="InterPro" id="IPR020937">
    <property type="entry name" value="SecA_CS"/>
</dbReference>
<dbReference type="InterPro" id="IPR011115">
    <property type="entry name" value="SecA_DEAD"/>
</dbReference>
<dbReference type="InterPro" id="IPR014018">
    <property type="entry name" value="SecA_motor_DEAD"/>
</dbReference>
<dbReference type="InterPro" id="IPR011130">
    <property type="entry name" value="SecA_preprotein_X-link_dom"/>
</dbReference>
<dbReference type="InterPro" id="IPR044722">
    <property type="entry name" value="SecA_SF2_C"/>
</dbReference>
<dbReference type="InterPro" id="IPR011116">
    <property type="entry name" value="SecA_Wing/Scaffold"/>
</dbReference>
<dbReference type="InterPro" id="IPR036266">
    <property type="entry name" value="SecA_Wing/Scaffold_sf"/>
</dbReference>
<dbReference type="InterPro" id="IPR036670">
    <property type="entry name" value="SecA_X-link_sf"/>
</dbReference>
<dbReference type="PANTHER" id="PTHR30612:SF0">
    <property type="entry name" value="CHLOROPLAST PROTEIN-TRANSPORTING ATPASE"/>
    <property type="match status" value="1"/>
</dbReference>
<dbReference type="PANTHER" id="PTHR30612">
    <property type="entry name" value="SECA INNER MEMBRANE COMPONENT OF SEC PROTEIN SECRETION SYSTEM"/>
    <property type="match status" value="1"/>
</dbReference>
<dbReference type="Pfam" id="PF21090">
    <property type="entry name" value="P-loop_SecA"/>
    <property type="match status" value="2"/>
</dbReference>
<dbReference type="Pfam" id="PF07517">
    <property type="entry name" value="SecA_DEAD"/>
    <property type="match status" value="1"/>
</dbReference>
<dbReference type="Pfam" id="PF01043">
    <property type="entry name" value="SecA_PP_bind"/>
    <property type="match status" value="1"/>
</dbReference>
<dbReference type="Pfam" id="PF07516">
    <property type="entry name" value="SecA_SW"/>
    <property type="match status" value="1"/>
</dbReference>
<dbReference type="PRINTS" id="PR00906">
    <property type="entry name" value="SECA"/>
</dbReference>
<dbReference type="SMART" id="SM00957">
    <property type="entry name" value="SecA_DEAD"/>
    <property type="match status" value="1"/>
</dbReference>
<dbReference type="SMART" id="SM00958">
    <property type="entry name" value="SecA_PP_bind"/>
    <property type="match status" value="1"/>
</dbReference>
<dbReference type="SUPFAM" id="SSF81886">
    <property type="entry name" value="Helical scaffold and wing domains of SecA"/>
    <property type="match status" value="1"/>
</dbReference>
<dbReference type="SUPFAM" id="SSF52540">
    <property type="entry name" value="P-loop containing nucleoside triphosphate hydrolases"/>
    <property type="match status" value="2"/>
</dbReference>
<dbReference type="SUPFAM" id="SSF81767">
    <property type="entry name" value="Pre-protein crosslinking domain of SecA"/>
    <property type="match status" value="1"/>
</dbReference>
<dbReference type="PROSITE" id="PS01312">
    <property type="entry name" value="SECA"/>
    <property type="match status" value="1"/>
</dbReference>
<dbReference type="PROSITE" id="PS51196">
    <property type="entry name" value="SECA_MOTOR_DEAD"/>
    <property type="match status" value="1"/>
</dbReference>
<accession>B9K8Q4</accession>
<keyword id="KW-0067">ATP-binding</keyword>
<keyword id="KW-0997">Cell inner membrane</keyword>
<keyword id="KW-1003">Cell membrane</keyword>
<keyword id="KW-0963">Cytoplasm</keyword>
<keyword id="KW-0472">Membrane</keyword>
<keyword id="KW-0547">Nucleotide-binding</keyword>
<keyword id="KW-0653">Protein transport</keyword>
<keyword id="KW-1278">Translocase</keyword>
<keyword id="KW-0811">Translocation</keyword>
<keyword id="KW-0813">Transport</keyword>
<evidence type="ECO:0000255" key="1">
    <source>
        <dbReference type="HAMAP-Rule" id="MF_01382"/>
    </source>
</evidence>
<evidence type="ECO:0000256" key="2">
    <source>
        <dbReference type="SAM" id="MobiDB-lite"/>
    </source>
</evidence>
<comment type="function">
    <text evidence="1">Part of the Sec protein translocase complex. Interacts with the SecYEG preprotein conducting channel. Has a central role in coupling the hydrolysis of ATP to the transfer of proteins into and across the cell membrane, serving as an ATP-driven molecular motor driving the stepwise translocation of polypeptide chains across the membrane.</text>
</comment>
<comment type="catalytic activity">
    <reaction evidence="1">
        <text>ATP + H2O + cellular proteinSide 1 = ADP + phosphate + cellular proteinSide 2.</text>
        <dbReference type="EC" id="7.4.2.8"/>
    </reaction>
</comment>
<comment type="subunit">
    <text evidence="1">Monomer and homodimer. Part of the essential Sec protein translocation apparatus which comprises SecA, SecYEG and auxiliary proteins SecDF. Other proteins may also be involved.</text>
</comment>
<comment type="subcellular location">
    <subcellularLocation>
        <location evidence="1">Cell inner membrane</location>
        <topology evidence="1">Peripheral membrane protein</topology>
        <orientation evidence="1">Cytoplasmic side</orientation>
    </subcellularLocation>
    <subcellularLocation>
        <location evidence="1">Cytoplasm</location>
    </subcellularLocation>
    <text evidence="1">Distribution is 50-50.</text>
</comment>
<comment type="similarity">
    <text evidence="1">Belongs to the SecA family.</text>
</comment>
<proteinExistence type="inferred from homology"/>
<feature type="chain" id="PRO_1000184250" description="Protein translocase subunit SecA">
    <location>
        <begin position="1"/>
        <end position="871"/>
    </location>
</feature>
<feature type="region of interest" description="Disordered" evidence="2">
    <location>
        <begin position="852"/>
        <end position="871"/>
    </location>
</feature>
<feature type="compositionally biased region" description="Basic residues" evidence="2">
    <location>
        <begin position="855"/>
        <end position="871"/>
    </location>
</feature>
<feature type="binding site" evidence="1">
    <location>
        <position position="80"/>
    </location>
    <ligand>
        <name>ATP</name>
        <dbReference type="ChEBI" id="CHEBI:30616"/>
    </ligand>
</feature>
<feature type="binding site" evidence="1">
    <location>
        <begin position="98"/>
        <end position="102"/>
    </location>
    <ligand>
        <name>ATP</name>
        <dbReference type="ChEBI" id="CHEBI:30616"/>
    </ligand>
</feature>
<feature type="binding site" evidence="1">
    <location>
        <position position="537"/>
    </location>
    <ligand>
        <name>ATP</name>
        <dbReference type="ChEBI" id="CHEBI:30616"/>
    </ligand>
</feature>
<reference key="1">
    <citation type="submission" date="2007-11" db="EMBL/GenBank/DDBJ databases">
        <title>The genome sequence of the hyperthermophilic bacterium Thermotoga neapolitana.</title>
        <authorList>
            <person name="Lim S.K."/>
            <person name="Kim J.S."/>
            <person name="Cha S.H."/>
            <person name="Park B.C."/>
            <person name="Lee D.S."/>
            <person name="Tae H.S."/>
            <person name="Kim S.-J."/>
            <person name="Kim J.J."/>
            <person name="Park K.J."/>
            <person name="Lee S.Y."/>
        </authorList>
    </citation>
    <scope>NUCLEOTIDE SEQUENCE [LARGE SCALE GENOMIC DNA]</scope>
    <source>
        <strain>ATCC 49049 / DSM 4359 / NBRC 107923 / NS-E</strain>
    </source>
</reference>
<gene>
    <name evidence="1" type="primary">secA</name>
    <name type="ordered locus">CTN_1161</name>
</gene>
<name>SECA_THENN</name>